<keyword id="KW-0067">ATP-binding</keyword>
<keyword id="KW-0342">GTP-binding</keyword>
<keyword id="KW-0547">Nucleotide-binding</keyword>
<feature type="chain" id="PRO_1000056827" description="Nucleotide-binding protein mma_3120">
    <location>
        <begin position="1"/>
        <end position="287"/>
    </location>
</feature>
<feature type="binding site" evidence="1">
    <location>
        <begin position="8"/>
        <end position="15"/>
    </location>
    <ligand>
        <name>ATP</name>
        <dbReference type="ChEBI" id="CHEBI:30616"/>
    </ligand>
</feature>
<feature type="binding site" evidence="1">
    <location>
        <begin position="57"/>
        <end position="60"/>
    </location>
    <ligand>
        <name>GTP</name>
        <dbReference type="ChEBI" id="CHEBI:37565"/>
    </ligand>
</feature>
<accession>A6T2R3</accession>
<organism>
    <name type="scientific">Janthinobacterium sp. (strain Marseille)</name>
    <name type="common">Minibacterium massiliensis</name>
    <dbReference type="NCBI Taxonomy" id="375286"/>
    <lineage>
        <taxon>Bacteria</taxon>
        <taxon>Pseudomonadati</taxon>
        <taxon>Pseudomonadota</taxon>
        <taxon>Betaproteobacteria</taxon>
        <taxon>Burkholderiales</taxon>
        <taxon>Oxalobacteraceae</taxon>
        <taxon>Janthinobacterium</taxon>
    </lineage>
</organism>
<gene>
    <name type="ordered locus">mma_3120</name>
</gene>
<name>Y3120_JANMA</name>
<evidence type="ECO:0000255" key="1">
    <source>
        <dbReference type="HAMAP-Rule" id="MF_00636"/>
    </source>
</evidence>
<protein>
    <recommendedName>
        <fullName evidence="1">Nucleotide-binding protein mma_3120</fullName>
    </recommendedName>
</protein>
<reference key="1">
    <citation type="journal article" date="2007" name="PLoS Genet.">
        <title>Genome analysis of Minibacterium massiliensis highlights the convergent evolution of water-living bacteria.</title>
        <authorList>
            <person name="Audic S."/>
            <person name="Robert C."/>
            <person name="Campagna B."/>
            <person name="Parinello H."/>
            <person name="Claverie J.-M."/>
            <person name="Raoult D."/>
            <person name="Drancourt M."/>
        </authorList>
    </citation>
    <scope>NUCLEOTIDE SEQUENCE [LARGE SCALE GENOMIC DNA]</scope>
    <source>
        <strain>Marseille</strain>
    </source>
</reference>
<sequence>MRIILITGISGSGKSVGLTSLEDAGYFCVDNLPPTLLRALVATRQEEHADKLAVAMDARSASSLIGLPADIAWLQSQGHEVKVLFLTAKTDSLIARFSETRRSHPLSHRGFSSTAAEDRRTLTECIREEREMLSGVEEISHVIDTSGMSANKLRGWIKALIESDHSPLTVLFESFAFKFGVPLDADLVFDVRMLPNPHYDSQLRPLTGRDAPVQAFLQDQPDATALLADIRGFVEKWLPAFKKDNRSYLTVAIGCTGGQHRSVYMVEQLAAHFRAHEHVILRHRELD</sequence>
<proteinExistence type="inferred from homology"/>
<dbReference type="EMBL" id="CP000269">
    <property type="protein sequence ID" value="ABR89444.1"/>
    <property type="molecule type" value="Genomic_DNA"/>
</dbReference>
<dbReference type="RefSeq" id="WP_012080963.1">
    <property type="nucleotide sequence ID" value="NC_009659.1"/>
</dbReference>
<dbReference type="SMR" id="A6T2R3"/>
<dbReference type="STRING" id="375286.mma_3120"/>
<dbReference type="KEGG" id="mms:mma_3120"/>
<dbReference type="eggNOG" id="COG1660">
    <property type="taxonomic scope" value="Bacteria"/>
</dbReference>
<dbReference type="HOGENOM" id="CLU_059558_1_1_4"/>
<dbReference type="OrthoDB" id="9784461at2"/>
<dbReference type="Proteomes" id="UP000006388">
    <property type="component" value="Chromosome"/>
</dbReference>
<dbReference type="GO" id="GO:0005524">
    <property type="term" value="F:ATP binding"/>
    <property type="evidence" value="ECO:0007669"/>
    <property type="project" value="UniProtKB-UniRule"/>
</dbReference>
<dbReference type="GO" id="GO:0005525">
    <property type="term" value="F:GTP binding"/>
    <property type="evidence" value="ECO:0007669"/>
    <property type="project" value="UniProtKB-UniRule"/>
</dbReference>
<dbReference type="HAMAP" id="MF_00636">
    <property type="entry name" value="RapZ_like"/>
    <property type="match status" value="1"/>
</dbReference>
<dbReference type="InterPro" id="IPR027417">
    <property type="entry name" value="P-loop_NTPase"/>
</dbReference>
<dbReference type="InterPro" id="IPR005337">
    <property type="entry name" value="RapZ-like"/>
</dbReference>
<dbReference type="InterPro" id="IPR053930">
    <property type="entry name" value="RapZ-like_N"/>
</dbReference>
<dbReference type="InterPro" id="IPR053931">
    <property type="entry name" value="RapZ_C"/>
</dbReference>
<dbReference type="NCBIfam" id="NF003828">
    <property type="entry name" value="PRK05416.1"/>
    <property type="match status" value="1"/>
</dbReference>
<dbReference type="PANTHER" id="PTHR30448">
    <property type="entry name" value="RNASE ADAPTER PROTEIN RAPZ"/>
    <property type="match status" value="1"/>
</dbReference>
<dbReference type="PANTHER" id="PTHR30448:SF0">
    <property type="entry name" value="RNASE ADAPTER PROTEIN RAPZ"/>
    <property type="match status" value="1"/>
</dbReference>
<dbReference type="Pfam" id="PF22740">
    <property type="entry name" value="PapZ_C"/>
    <property type="match status" value="1"/>
</dbReference>
<dbReference type="Pfam" id="PF03668">
    <property type="entry name" value="RapZ-like_N"/>
    <property type="match status" value="1"/>
</dbReference>
<dbReference type="PIRSF" id="PIRSF005052">
    <property type="entry name" value="P-loopkin"/>
    <property type="match status" value="1"/>
</dbReference>
<dbReference type="SUPFAM" id="SSF52540">
    <property type="entry name" value="P-loop containing nucleoside triphosphate hydrolases"/>
    <property type="match status" value="1"/>
</dbReference>
<comment type="function">
    <text evidence="1">Displays ATPase and GTPase activities.</text>
</comment>
<comment type="similarity">
    <text evidence="1">Belongs to the RapZ-like family.</text>
</comment>